<sequence length="297" mass="33316">MKRPDYRTLQALDAVIRERGFERAAQKLCITQSAVSQRIKQLENLFGQPLLVRTVPPRPTEQGQKLLALLHQVELLEEEWLGNDNGGDTPLLLSLAVNADSLATWLLPALKPVLADSPIRLNLQVEDETRTQERLRRGEVVGAVSIQPQPLPSCLVDQLGALDYLFVASKPFAERYFPNGVTRSALLKAPAVAFDHLDDMHQAFLQQNFDLSPGSVPCHIVNSSEAFVQLARQGTTCCMIPHLQIEKELASGELINLTPGLLQRRMLFWHRFAPESRTMRKVTDALLSYGRQVLRQD</sequence>
<protein>
    <recommendedName>
        <fullName evidence="1">HTH-type transcriptional regulator ArgP</fullName>
    </recommendedName>
</protein>
<feature type="chain" id="PRO_1000060883" description="HTH-type transcriptional regulator ArgP">
    <location>
        <begin position="1"/>
        <end position="297"/>
    </location>
</feature>
<feature type="domain" description="HTH lysR-type" evidence="1">
    <location>
        <begin position="4"/>
        <end position="60"/>
    </location>
</feature>
<feature type="DNA-binding region" description="H-T-H motif" evidence="1">
    <location>
        <begin position="21"/>
        <end position="40"/>
    </location>
</feature>
<name>ARGP_YERE8</name>
<reference key="1">
    <citation type="journal article" date="2006" name="PLoS Genet.">
        <title>The complete genome sequence and comparative genome analysis of the high pathogenicity Yersinia enterocolitica strain 8081.</title>
        <authorList>
            <person name="Thomson N.R."/>
            <person name="Howard S."/>
            <person name="Wren B.W."/>
            <person name="Holden M.T.G."/>
            <person name="Crossman L."/>
            <person name="Challis G.L."/>
            <person name="Churcher C."/>
            <person name="Mungall K."/>
            <person name="Brooks K."/>
            <person name="Chillingworth T."/>
            <person name="Feltwell T."/>
            <person name="Abdellah Z."/>
            <person name="Hauser H."/>
            <person name="Jagels K."/>
            <person name="Maddison M."/>
            <person name="Moule S."/>
            <person name="Sanders M."/>
            <person name="Whitehead S."/>
            <person name="Quail M.A."/>
            <person name="Dougan G."/>
            <person name="Parkhill J."/>
            <person name="Prentice M.B."/>
        </authorList>
    </citation>
    <scope>NUCLEOTIDE SEQUENCE [LARGE SCALE GENOMIC DNA]</scope>
    <source>
        <strain>NCTC 13174 / 8081</strain>
    </source>
</reference>
<accession>A1JPP6</accession>
<proteinExistence type="inferred from homology"/>
<organism>
    <name type="scientific">Yersinia enterocolitica serotype O:8 / biotype 1B (strain NCTC 13174 / 8081)</name>
    <dbReference type="NCBI Taxonomy" id="393305"/>
    <lineage>
        <taxon>Bacteria</taxon>
        <taxon>Pseudomonadati</taxon>
        <taxon>Pseudomonadota</taxon>
        <taxon>Gammaproteobacteria</taxon>
        <taxon>Enterobacterales</taxon>
        <taxon>Yersiniaceae</taxon>
        <taxon>Yersinia</taxon>
    </lineage>
</organism>
<keyword id="KW-0238">DNA-binding</keyword>
<keyword id="KW-0804">Transcription</keyword>
<keyword id="KW-0805">Transcription regulation</keyword>
<evidence type="ECO:0000255" key="1">
    <source>
        <dbReference type="HAMAP-Rule" id="MF_00513"/>
    </source>
</evidence>
<evidence type="ECO:0000305" key="2"/>
<gene>
    <name evidence="1" type="primary">argP</name>
    <name type="synonym">iciA</name>
    <name type="ordered locus">YE3402</name>
</gene>
<dbReference type="EMBL" id="AM286415">
    <property type="protein sequence ID" value="CAL13428.1"/>
    <property type="molecule type" value="Genomic_DNA"/>
</dbReference>
<dbReference type="RefSeq" id="WP_005163344.1">
    <property type="nucleotide sequence ID" value="NC_008800.1"/>
</dbReference>
<dbReference type="RefSeq" id="YP_001007571.1">
    <property type="nucleotide sequence ID" value="NC_008800.1"/>
</dbReference>
<dbReference type="SMR" id="A1JPP6"/>
<dbReference type="KEGG" id="yen:YE3402"/>
<dbReference type="PATRIC" id="fig|393305.7.peg.3614"/>
<dbReference type="eggNOG" id="COG0583">
    <property type="taxonomic scope" value="Bacteria"/>
</dbReference>
<dbReference type="HOGENOM" id="CLU_063829_0_0_6"/>
<dbReference type="OrthoDB" id="3252676at2"/>
<dbReference type="Proteomes" id="UP000000642">
    <property type="component" value="Chromosome"/>
</dbReference>
<dbReference type="GO" id="GO:0003677">
    <property type="term" value="F:DNA binding"/>
    <property type="evidence" value="ECO:0007669"/>
    <property type="project" value="UniProtKB-UniRule"/>
</dbReference>
<dbReference type="GO" id="GO:0003700">
    <property type="term" value="F:DNA-binding transcription factor activity"/>
    <property type="evidence" value="ECO:0007669"/>
    <property type="project" value="UniProtKB-UniRule"/>
</dbReference>
<dbReference type="CDD" id="cd08428">
    <property type="entry name" value="PBP2_IciA_ArgP"/>
    <property type="match status" value="1"/>
</dbReference>
<dbReference type="FunFam" id="1.10.10.10:FF:000061">
    <property type="entry name" value="HTH-type transcriptional regulator ArgP"/>
    <property type="match status" value="1"/>
</dbReference>
<dbReference type="FunFam" id="3.40.190.290:FF:000002">
    <property type="entry name" value="HTH-type transcriptional regulator ArgP"/>
    <property type="match status" value="1"/>
</dbReference>
<dbReference type="Gene3D" id="3.40.190.290">
    <property type="match status" value="1"/>
</dbReference>
<dbReference type="Gene3D" id="1.10.10.10">
    <property type="entry name" value="Winged helix-like DNA-binding domain superfamily/Winged helix DNA-binding domain"/>
    <property type="match status" value="1"/>
</dbReference>
<dbReference type="HAMAP" id="MF_00513">
    <property type="entry name" value="HTH_type_ArgP"/>
    <property type="match status" value="1"/>
</dbReference>
<dbReference type="InterPro" id="IPR017685">
    <property type="entry name" value="ArgP"/>
</dbReference>
<dbReference type="InterPro" id="IPR023490">
    <property type="entry name" value="ArgP_gammaproteobact"/>
</dbReference>
<dbReference type="InterPro" id="IPR050176">
    <property type="entry name" value="LTTR"/>
</dbReference>
<dbReference type="InterPro" id="IPR005119">
    <property type="entry name" value="LysR_subst-bd"/>
</dbReference>
<dbReference type="InterPro" id="IPR000847">
    <property type="entry name" value="Tscrpt_reg_HTH_LysR"/>
</dbReference>
<dbReference type="InterPro" id="IPR036388">
    <property type="entry name" value="WH-like_DNA-bd_sf"/>
</dbReference>
<dbReference type="InterPro" id="IPR036390">
    <property type="entry name" value="WH_DNA-bd_sf"/>
</dbReference>
<dbReference type="NCBIfam" id="TIGR03298">
    <property type="entry name" value="argP"/>
    <property type="match status" value="1"/>
</dbReference>
<dbReference type="NCBIfam" id="NF002964">
    <property type="entry name" value="PRK03635.1"/>
    <property type="match status" value="1"/>
</dbReference>
<dbReference type="NCBIfam" id="NF009888">
    <property type="entry name" value="PRK13348.1"/>
    <property type="match status" value="1"/>
</dbReference>
<dbReference type="PANTHER" id="PTHR30579:SF2">
    <property type="entry name" value="HTH-TYPE TRANSCRIPTIONAL REGULATOR ARGP"/>
    <property type="match status" value="1"/>
</dbReference>
<dbReference type="PANTHER" id="PTHR30579">
    <property type="entry name" value="TRANSCRIPTIONAL REGULATOR"/>
    <property type="match status" value="1"/>
</dbReference>
<dbReference type="Pfam" id="PF00126">
    <property type="entry name" value="HTH_1"/>
    <property type="match status" value="1"/>
</dbReference>
<dbReference type="Pfam" id="PF03466">
    <property type="entry name" value="LysR_substrate"/>
    <property type="match status" value="1"/>
</dbReference>
<dbReference type="PRINTS" id="PR00039">
    <property type="entry name" value="HTHLYSR"/>
</dbReference>
<dbReference type="SUPFAM" id="SSF53850">
    <property type="entry name" value="Periplasmic binding protein-like II"/>
    <property type="match status" value="1"/>
</dbReference>
<dbReference type="SUPFAM" id="SSF46785">
    <property type="entry name" value="Winged helix' DNA-binding domain"/>
    <property type="match status" value="1"/>
</dbReference>
<dbReference type="PROSITE" id="PS50931">
    <property type="entry name" value="HTH_LYSR"/>
    <property type="match status" value="1"/>
</dbReference>
<comment type="function">
    <text evidence="1">Controls the transcription of genes involved in arginine and lysine metabolism.</text>
</comment>
<comment type="subunit">
    <text evidence="1">Homodimer.</text>
</comment>
<comment type="similarity">
    <text evidence="2">Belongs to the LysR transcriptional regulatory family.</text>
</comment>